<name>PUR7_KLEP3</name>
<dbReference type="EC" id="6.3.2.6" evidence="1"/>
<dbReference type="EMBL" id="CP000964">
    <property type="protein sequence ID" value="ACI09752.1"/>
    <property type="molecule type" value="Genomic_DNA"/>
</dbReference>
<dbReference type="SMR" id="B5XVM9"/>
<dbReference type="KEGG" id="kpe:KPK_1326"/>
<dbReference type="HOGENOM" id="CLU_061495_2_1_6"/>
<dbReference type="UniPathway" id="UPA00074">
    <property type="reaction ID" value="UER00131"/>
</dbReference>
<dbReference type="Proteomes" id="UP000001734">
    <property type="component" value="Chromosome"/>
</dbReference>
<dbReference type="GO" id="GO:0005829">
    <property type="term" value="C:cytosol"/>
    <property type="evidence" value="ECO:0007669"/>
    <property type="project" value="TreeGrafter"/>
</dbReference>
<dbReference type="GO" id="GO:0005524">
    <property type="term" value="F:ATP binding"/>
    <property type="evidence" value="ECO:0007669"/>
    <property type="project" value="UniProtKB-KW"/>
</dbReference>
<dbReference type="GO" id="GO:0004639">
    <property type="term" value="F:phosphoribosylaminoimidazolesuccinocarboxamide synthase activity"/>
    <property type="evidence" value="ECO:0007669"/>
    <property type="project" value="UniProtKB-UniRule"/>
</dbReference>
<dbReference type="GO" id="GO:0006189">
    <property type="term" value="P:'de novo' IMP biosynthetic process"/>
    <property type="evidence" value="ECO:0007669"/>
    <property type="project" value="UniProtKB-UniRule"/>
</dbReference>
<dbReference type="GO" id="GO:0009236">
    <property type="term" value="P:cobalamin biosynthetic process"/>
    <property type="evidence" value="ECO:0007669"/>
    <property type="project" value="InterPro"/>
</dbReference>
<dbReference type="CDD" id="cd01415">
    <property type="entry name" value="SAICAR_synt_PurC"/>
    <property type="match status" value="1"/>
</dbReference>
<dbReference type="FunFam" id="3.30.200.20:FF:000086">
    <property type="entry name" value="Phosphoribosylaminoimidazole-succinocarboxamide synthase"/>
    <property type="match status" value="1"/>
</dbReference>
<dbReference type="FunFam" id="3.30.470.20:FF:000006">
    <property type="entry name" value="Phosphoribosylaminoimidazole-succinocarboxamide synthase"/>
    <property type="match status" value="1"/>
</dbReference>
<dbReference type="Gene3D" id="3.30.470.20">
    <property type="entry name" value="ATP-grasp fold, B domain"/>
    <property type="match status" value="1"/>
</dbReference>
<dbReference type="Gene3D" id="3.30.200.20">
    <property type="entry name" value="Phosphorylase Kinase, domain 1"/>
    <property type="match status" value="1"/>
</dbReference>
<dbReference type="HAMAP" id="MF_00137">
    <property type="entry name" value="SAICAR_synth"/>
    <property type="match status" value="1"/>
</dbReference>
<dbReference type="InterPro" id="IPR028923">
    <property type="entry name" value="SAICAR_synt/ADE2_N"/>
</dbReference>
<dbReference type="InterPro" id="IPR033934">
    <property type="entry name" value="SAICAR_synt_PurC"/>
</dbReference>
<dbReference type="InterPro" id="IPR001636">
    <property type="entry name" value="SAICAR_synth"/>
</dbReference>
<dbReference type="InterPro" id="IPR050089">
    <property type="entry name" value="SAICAR_synthetase"/>
</dbReference>
<dbReference type="InterPro" id="IPR018236">
    <property type="entry name" value="SAICAR_synthetase_CS"/>
</dbReference>
<dbReference type="NCBIfam" id="TIGR00081">
    <property type="entry name" value="purC"/>
    <property type="match status" value="1"/>
</dbReference>
<dbReference type="PANTHER" id="PTHR43599">
    <property type="entry name" value="MULTIFUNCTIONAL PROTEIN ADE2"/>
    <property type="match status" value="1"/>
</dbReference>
<dbReference type="PANTHER" id="PTHR43599:SF3">
    <property type="entry name" value="SI:DKEY-6E2.2"/>
    <property type="match status" value="1"/>
</dbReference>
<dbReference type="Pfam" id="PF01259">
    <property type="entry name" value="SAICAR_synt"/>
    <property type="match status" value="1"/>
</dbReference>
<dbReference type="SUPFAM" id="SSF56104">
    <property type="entry name" value="SAICAR synthase-like"/>
    <property type="match status" value="1"/>
</dbReference>
<dbReference type="PROSITE" id="PS01057">
    <property type="entry name" value="SAICAR_SYNTHETASE_1"/>
    <property type="match status" value="1"/>
</dbReference>
<dbReference type="PROSITE" id="PS01058">
    <property type="entry name" value="SAICAR_SYNTHETASE_2"/>
    <property type="match status" value="1"/>
</dbReference>
<keyword id="KW-0067">ATP-binding</keyword>
<keyword id="KW-0436">Ligase</keyword>
<keyword id="KW-0547">Nucleotide-binding</keyword>
<keyword id="KW-0658">Purine biosynthesis</keyword>
<organism>
    <name type="scientific">Klebsiella pneumoniae (strain 342)</name>
    <dbReference type="NCBI Taxonomy" id="507522"/>
    <lineage>
        <taxon>Bacteria</taxon>
        <taxon>Pseudomonadati</taxon>
        <taxon>Pseudomonadota</taxon>
        <taxon>Gammaproteobacteria</taxon>
        <taxon>Enterobacterales</taxon>
        <taxon>Enterobacteriaceae</taxon>
        <taxon>Klebsiella/Raoultella group</taxon>
        <taxon>Klebsiella</taxon>
        <taxon>Klebsiella pneumoniae complex</taxon>
    </lineage>
</organism>
<feature type="chain" id="PRO_1000095989" description="Phosphoribosylaminoimidazole-succinocarboxamide synthase">
    <location>
        <begin position="1"/>
        <end position="237"/>
    </location>
</feature>
<gene>
    <name evidence="1" type="primary">purC</name>
    <name type="ordered locus">KPK_1326</name>
</gene>
<reference key="1">
    <citation type="journal article" date="2008" name="PLoS Genet.">
        <title>Complete genome sequence of the N2-fixing broad host range endophyte Klebsiella pneumoniae 342 and virulence predictions verified in mice.</title>
        <authorList>
            <person name="Fouts D.E."/>
            <person name="Tyler H.L."/>
            <person name="DeBoy R.T."/>
            <person name="Daugherty S."/>
            <person name="Ren Q."/>
            <person name="Badger J.H."/>
            <person name="Durkin A.S."/>
            <person name="Huot H."/>
            <person name="Shrivastava S."/>
            <person name="Kothari S."/>
            <person name="Dodson R.J."/>
            <person name="Mohamoud Y."/>
            <person name="Khouri H."/>
            <person name="Roesch L.F.W."/>
            <person name="Krogfelt K.A."/>
            <person name="Struve C."/>
            <person name="Triplett E.W."/>
            <person name="Methe B.A."/>
        </authorList>
    </citation>
    <scope>NUCLEOTIDE SEQUENCE [LARGE SCALE GENOMIC DNA]</scope>
    <source>
        <strain>342</strain>
    </source>
</reference>
<comment type="catalytic activity">
    <reaction evidence="1">
        <text>5-amino-1-(5-phospho-D-ribosyl)imidazole-4-carboxylate + L-aspartate + ATP = (2S)-2-[5-amino-1-(5-phospho-beta-D-ribosyl)imidazole-4-carboxamido]succinate + ADP + phosphate + 2 H(+)</text>
        <dbReference type="Rhea" id="RHEA:22628"/>
        <dbReference type="ChEBI" id="CHEBI:15378"/>
        <dbReference type="ChEBI" id="CHEBI:29991"/>
        <dbReference type="ChEBI" id="CHEBI:30616"/>
        <dbReference type="ChEBI" id="CHEBI:43474"/>
        <dbReference type="ChEBI" id="CHEBI:58443"/>
        <dbReference type="ChEBI" id="CHEBI:77657"/>
        <dbReference type="ChEBI" id="CHEBI:456216"/>
        <dbReference type="EC" id="6.3.2.6"/>
    </reaction>
</comment>
<comment type="pathway">
    <text evidence="1">Purine metabolism; IMP biosynthesis via de novo pathway; 5-amino-1-(5-phospho-D-ribosyl)imidazole-4-carboxamide from 5-amino-1-(5-phospho-D-ribosyl)imidazole-4-carboxylate: step 1/2.</text>
</comment>
<comment type="similarity">
    <text evidence="1">Belongs to the SAICAR synthetase family.</text>
</comment>
<protein>
    <recommendedName>
        <fullName evidence="1">Phosphoribosylaminoimidazole-succinocarboxamide synthase</fullName>
        <ecNumber evidence="1">6.3.2.6</ecNumber>
    </recommendedName>
    <alternativeName>
        <fullName evidence="1">SAICAR synthetase</fullName>
    </alternativeName>
</protein>
<evidence type="ECO:0000255" key="1">
    <source>
        <dbReference type="HAMAP-Rule" id="MF_00137"/>
    </source>
</evidence>
<sequence length="237" mass="26878">MKKQAELYRGKAKTVYSTDNPDLLVLEFRNDTSAGDGARIEQFDRKGMVNNKFNHFIMSKLAEAGIPTQMEALLSDTECLVKKLDMVPVECVVRNRAAGSLVKRLGIEEGIELNPPLFDLFLKNDAMHDPMVNDSYCETFGWVSKENLARMRELTYKANDVLKKLFDDAGLILVDFKLEFGLFKGEVVLGDEFSPDGSRLWDKNTLDKMDKDRFRQSLGGLIEAYEEVAHRLGVKLD</sequence>
<accession>B5XVM9</accession>
<proteinExistence type="inferred from homology"/>